<dbReference type="EMBL" id="CP000439">
    <property type="protein sequence ID" value="ABK90169.1"/>
    <property type="molecule type" value="Genomic_DNA"/>
</dbReference>
<dbReference type="RefSeq" id="WP_003016252.1">
    <property type="nucleotide sequence ID" value="NZ_CP009633.1"/>
</dbReference>
<dbReference type="SMR" id="A0Q7F4"/>
<dbReference type="GeneID" id="75264980"/>
<dbReference type="KEGG" id="ftn:FTN_1288"/>
<dbReference type="KEGG" id="ftx:AW25_718"/>
<dbReference type="BioCyc" id="FTUL401614:G1G75-1333-MONOMER"/>
<dbReference type="Proteomes" id="UP000000762">
    <property type="component" value="Chromosome"/>
</dbReference>
<dbReference type="GO" id="GO:0022625">
    <property type="term" value="C:cytosolic large ribosomal subunit"/>
    <property type="evidence" value="ECO:0007669"/>
    <property type="project" value="TreeGrafter"/>
</dbReference>
<dbReference type="GO" id="GO:0003729">
    <property type="term" value="F:mRNA binding"/>
    <property type="evidence" value="ECO:0007669"/>
    <property type="project" value="TreeGrafter"/>
</dbReference>
<dbReference type="GO" id="GO:0003735">
    <property type="term" value="F:structural constituent of ribosome"/>
    <property type="evidence" value="ECO:0007669"/>
    <property type="project" value="InterPro"/>
</dbReference>
<dbReference type="GO" id="GO:0017148">
    <property type="term" value="P:negative regulation of translation"/>
    <property type="evidence" value="ECO:0007669"/>
    <property type="project" value="TreeGrafter"/>
</dbReference>
<dbReference type="GO" id="GO:0006412">
    <property type="term" value="P:translation"/>
    <property type="evidence" value="ECO:0007669"/>
    <property type="project" value="UniProtKB-UniRule"/>
</dbReference>
<dbReference type="CDD" id="cd00392">
    <property type="entry name" value="Ribosomal_L13"/>
    <property type="match status" value="1"/>
</dbReference>
<dbReference type="FunFam" id="3.90.1180.10:FF:000001">
    <property type="entry name" value="50S ribosomal protein L13"/>
    <property type="match status" value="1"/>
</dbReference>
<dbReference type="Gene3D" id="3.90.1180.10">
    <property type="entry name" value="Ribosomal protein L13"/>
    <property type="match status" value="1"/>
</dbReference>
<dbReference type="HAMAP" id="MF_01366">
    <property type="entry name" value="Ribosomal_uL13"/>
    <property type="match status" value="1"/>
</dbReference>
<dbReference type="InterPro" id="IPR005822">
    <property type="entry name" value="Ribosomal_uL13"/>
</dbReference>
<dbReference type="InterPro" id="IPR005823">
    <property type="entry name" value="Ribosomal_uL13_bac-type"/>
</dbReference>
<dbReference type="InterPro" id="IPR023563">
    <property type="entry name" value="Ribosomal_uL13_CS"/>
</dbReference>
<dbReference type="InterPro" id="IPR036899">
    <property type="entry name" value="Ribosomal_uL13_sf"/>
</dbReference>
<dbReference type="NCBIfam" id="TIGR01066">
    <property type="entry name" value="rplM_bact"/>
    <property type="match status" value="1"/>
</dbReference>
<dbReference type="PANTHER" id="PTHR11545:SF2">
    <property type="entry name" value="LARGE RIBOSOMAL SUBUNIT PROTEIN UL13M"/>
    <property type="match status" value="1"/>
</dbReference>
<dbReference type="PANTHER" id="PTHR11545">
    <property type="entry name" value="RIBOSOMAL PROTEIN L13"/>
    <property type="match status" value="1"/>
</dbReference>
<dbReference type="Pfam" id="PF00572">
    <property type="entry name" value="Ribosomal_L13"/>
    <property type="match status" value="1"/>
</dbReference>
<dbReference type="PIRSF" id="PIRSF002181">
    <property type="entry name" value="Ribosomal_L13"/>
    <property type="match status" value="1"/>
</dbReference>
<dbReference type="SUPFAM" id="SSF52161">
    <property type="entry name" value="Ribosomal protein L13"/>
    <property type="match status" value="1"/>
</dbReference>
<dbReference type="PROSITE" id="PS00783">
    <property type="entry name" value="RIBOSOMAL_L13"/>
    <property type="match status" value="1"/>
</dbReference>
<protein>
    <recommendedName>
        <fullName evidence="1">Large ribosomal subunit protein uL13</fullName>
    </recommendedName>
    <alternativeName>
        <fullName evidence="2">50S ribosomal protein L13</fullName>
    </alternativeName>
</protein>
<sequence>MKTFTAKPSNIKREWLLIDATDKTLGRLATEVAMILRGKNKPEYTPHMDTGDYVVIVNAEKVAVTGNKRKAKTYYHHTGYIGGIKSVSFEKLIATHPERAIEKAVRGMLPRTPLGRTMFKKLKVYAGEAHPHTAQQPKAHNI</sequence>
<name>RL13_FRATN</name>
<proteinExistence type="inferred from homology"/>
<accession>A0Q7F4</accession>
<evidence type="ECO:0000255" key="1">
    <source>
        <dbReference type="HAMAP-Rule" id="MF_01366"/>
    </source>
</evidence>
<evidence type="ECO:0000305" key="2"/>
<reference key="1">
    <citation type="journal article" date="2007" name="Genome Biol.">
        <title>Comparison of Francisella tularensis genomes reveals evolutionary events associated with the emergence of human pathogenic strains.</title>
        <authorList>
            <person name="Rohmer L."/>
            <person name="Fong C."/>
            <person name="Abmayr S."/>
            <person name="Wasnick M."/>
            <person name="Larson Freeman T.J."/>
            <person name="Radey M."/>
            <person name="Guina T."/>
            <person name="Svensson K."/>
            <person name="Hayden H.S."/>
            <person name="Jacobs M."/>
            <person name="Gallagher L.A."/>
            <person name="Manoil C."/>
            <person name="Ernst R.K."/>
            <person name="Drees B."/>
            <person name="Buckley D."/>
            <person name="Haugen E."/>
            <person name="Bovee D."/>
            <person name="Zhou Y."/>
            <person name="Chang J."/>
            <person name="Levy R."/>
            <person name="Lim R."/>
            <person name="Gillett W."/>
            <person name="Guenthener D."/>
            <person name="Kang A."/>
            <person name="Shaffer S.A."/>
            <person name="Taylor G."/>
            <person name="Chen J."/>
            <person name="Gallis B."/>
            <person name="D'Argenio D.A."/>
            <person name="Forsman M."/>
            <person name="Olson M.V."/>
            <person name="Goodlett D.R."/>
            <person name="Kaul R."/>
            <person name="Miller S.I."/>
            <person name="Brittnacher M.J."/>
        </authorList>
    </citation>
    <scope>NUCLEOTIDE SEQUENCE [LARGE SCALE GENOMIC DNA]</scope>
    <source>
        <strain>U112</strain>
    </source>
</reference>
<feature type="chain" id="PRO_1000055383" description="Large ribosomal subunit protein uL13">
    <location>
        <begin position="1"/>
        <end position="142"/>
    </location>
</feature>
<gene>
    <name evidence="1" type="primary">rplM</name>
    <name type="ordered locus">FTN_1288</name>
</gene>
<keyword id="KW-0687">Ribonucleoprotein</keyword>
<keyword id="KW-0689">Ribosomal protein</keyword>
<organism>
    <name type="scientific">Francisella tularensis subsp. novicida (strain U112)</name>
    <dbReference type="NCBI Taxonomy" id="401614"/>
    <lineage>
        <taxon>Bacteria</taxon>
        <taxon>Pseudomonadati</taxon>
        <taxon>Pseudomonadota</taxon>
        <taxon>Gammaproteobacteria</taxon>
        <taxon>Thiotrichales</taxon>
        <taxon>Francisellaceae</taxon>
        <taxon>Francisella</taxon>
    </lineage>
</organism>
<comment type="function">
    <text evidence="1">This protein is one of the early assembly proteins of the 50S ribosomal subunit, although it is not seen to bind rRNA by itself. It is important during the early stages of 50S assembly.</text>
</comment>
<comment type="subunit">
    <text evidence="1">Part of the 50S ribosomal subunit.</text>
</comment>
<comment type="similarity">
    <text evidence="1">Belongs to the universal ribosomal protein uL13 family.</text>
</comment>